<evidence type="ECO:0000255" key="1">
    <source>
        <dbReference type="HAMAP-Rule" id="MF_01367"/>
    </source>
</evidence>
<evidence type="ECO:0000305" key="2"/>
<accession>A5GVX0</accession>
<proteinExistence type="inferred from homology"/>
<dbReference type="EMBL" id="CT978603">
    <property type="protein sequence ID" value="CAK29029.1"/>
    <property type="molecule type" value="Genomic_DNA"/>
</dbReference>
<dbReference type="SMR" id="A5GVX0"/>
<dbReference type="STRING" id="316278.SynRCC307_2126"/>
<dbReference type="KEGG" id="syr:SynRCC307_2126"/>
<dbReference type="eggNOG" id="COG0093">
    <property type="taxonomic scope" value="Bacteria"/>
</dbReference>
<dbReference type="HOGENOM" id="CLU_095071_2_1_3"/>
<dbReference type="OrthoDB" id="9806379at2"/>
<dbReference type="Proteomes" id="UP000001115">
    <property type="component" value="Chromosome"/>
</dbReference>
<dbReference type="GO" id="GO:0022625">
    <property type="term" value="C:cytosolic large ribosomal subunit"/>
    <property type="evidence" value="ECO:0007669"/>
    <property type="project" value="TreeGrafter"/>
</dbReference>
<dbReference type="GO" id="GO:0070180">
    <property type="term" value="F:large ribosomal subunit rRNA binding"/>
    <property type="evidence" value="ECO:0007669"/>
    <property type="project" value="TreeGrafter"/>
</dbReference>
<dbReference type="GO" id="GO:0003735">
    <property type="term" value="F:structural constituent of ribosome"/>
    <property type="evidence" value="ECO:0007669"/>
    <property type="project" value="InterPro"/>
</dbReference>
<dbReference type="GO" id="GO:0006412">
    <property type="term" value="P:translation"/>
    <property type="evidence" value="ECO:0007669"/>
    <property type="project" value="UniProtKB-UniRule"/>
</dbReference>
<dbReference type="CDD" id="cd00337">
    <property type="entry name" value="Ribosomal_uL14"/>
    <property type="match status" value="1"/>
</dbReference>
<dbReference type="FunFam" id="2.40.150.20:FF:000001">
    <property type="entry name" value="50S ribosomal protein L14"/>
    <property type="match status" value="1"/>
</dbReference>
<dbReference type="Gene3D" id="2.40.150.20">
    <property type="entry name" value="Ribosomal protein L14"/>
    <property type="match status" value="1"/>
</dbReference>
<dbReference type="HAMAP" id="MF_01367">
    <property type="entry name" value="Ribosomal_uL14"/>
    <property type="match status" value="1"/>
</dbReference>
<dbReference type="InterPro" id="IPR000218">
    <property type="entry name" value="Ribosomal_uL14"/>
</dbReference>
<dbReference type="InterPro" id="IPR005745">
    <property type="entry name" value="Ribosomal_uL14_bac-type"/>
</dbReference>
<dbReference type="InterPro" id="IPR036853">
    <property type="entry name" value="Ribosomal_uL14_sf"/>
</dbReference>
<dbReference type="NCBIfam" id="TIGR01067">
    <property type="entry name" value="rplN_bact"/>
    <property type="match status" value="1"/>
</dbReference>
<dbReference type="PANTHER" id="PTHR11761">
    <property type="entry name" value="50S/60S RIBOSOMAL PROTEIN L14/L23"/>
    <property type="match status" value="1"/>
</dbReference>
<dbReference type="PANTHER" id="PTHR11761:SF3">
    <property type="entry name" value="LARGE RIBOSOMAL SUBUNIT PROTEIN UL14M"/>
    <property type="match status" value="1"/>
</dbReference>
<dbReference type="Pfam" id="PF00238">
    <property type="entry name" value="Ribosomal_L14"/>
    <property type="match status" value="1"/>
</dbReference>
<dbReference type="SMART" id="SM01374">
    <property type="entry name" value="Ribosomal_L14"/>
    <property type="match status" value="1"/>
</dbReference>
<dbReference type="SUPFAM" id="SSF50193">
    <property type="entry name" value="Ribosomal protein L14"/>
    <property type="match status" value="1"/>
</dbReference>
<sequence length="121" mass="13489">MIQQETFLNVADNSGAKRIQCIRVLGTNRRYAHVGDVIVATVKDAMPNMGVKKSDIVKAVVVRTKHTMRRETGNAIRFDDNAAVIINDDKNPRGTRVFGPVARELRERSFTKIVSLAPEVI</sequence>
<comment type="function">
    <text evidence="1">Binds to 23S rRNA. Forms part of two intersubunit bridges in the 70S ribosome.</text>
</comment>
<comment type="subunit">
    <text evidence="1">Part of the 50S ribosomal subunit. Forms a cluster with proteins L3 and L19. In the 70S ribosome, L14 and L19 interact and together make contacts with the 16S rRNA in bridges B5 and B8.</text>
</comment>
<comment type="similarity">
    <text evidence="1">Belongs to the universal ribosomal protein uL14 family.</text>
</comment>
<gene>
    <name evidence="1" type="primary">rplN</name>
    <name evidence="1" type="synonym">rpl14</name>
    <name type="ordered locus">SynRCC307_2126</name>
</gene>
<protein>
    <recommendedName>
        <fullName evidence="1">Large ribosomal subunit protein uL14</fullName>
    </recommendedName>
    <alternativeName>
        <fullName evidence="2">50S ribosomal protein L14</fullName>
    </alternativeName>
</protein>
<keyword id="KW-1185">Reference proteome</keyword>
<keyword id="KW-0687">Ribonucleoprotein</keyword>
<keyword id="KW-0689">Ribosomal protein</keyword>
<keyword id="KW-0694">RNA-binding</keyword>
<keyword id="KW-0699">rRNA-binding</keyword>
<name>RL14_SYNR3</name>
<organism>
    <name type="scientific">Synechococcus sp. (strain RCC307)</name>
    <dbReference type="NCBI Taxonomy" id="316278"/>
    <lineage>
        <taxon>Bacteria</taxon>
        <taxon>Bacillati</taxon>
        <taxon>Cyanobacteriota</taxon>
        <taxon>Cyanophyceae</taxon>
        <taxon>Synechococcales</taxon>
        <taxon>Synechococcaceae</taxon>
        <taxon>Synechococcus</taxon>
    </lineage>
</organism>
<reference key="1">
    <citation type="submission" date="2006-05" db="EMBL/GenBank/DDBJ databases">
        <authorList>
            <consortium name="Genoscope"/>
        </authorList>
    </citation>
    <scope>NUCLEOTIDE SEQUENCE [LARGE SCALE GENOMIC DNA]</scope>
    <source>
        <strain>RCC307</strain>
    </source>
</reference>
<feature type="chain" id="PRO_1000055736" description="Large ribosomal subunit protein uL14">
    <location>
        <begin position="1"/>
        <end position="121"/>
    </location>
</feature>